<proteinExistence type="evidence at protein level"/>
<organism>
    <name type="scientific">Arabidopsis thaliana</name>
    <name type="common">Mouse-ear cress</name>
    <dbReference type="NCBI Taxonomy" id="3702"/>
    <lineage>
        <taxon>Eukaryota</taxon>
        <taxon>Viridiplantae</taxon>
        <taxon>Streptophyta</taxon>
        <taxon>Embryophyta</taxon>
        <taxon>Tracheophyta</taxon>
        <taxon>Spermatophyta</taxon>
        <taxon>Magnoliopsida</taxon>
        <taxon>eudicotyledons</taxon>
        <taxon>Gunneridae</taxon>
        <taxon>Pentapetalae</taxon>
        <taxon>rosids</taxon>
        <taxon>malvids</taxon>
        <taxon>Brassicales</taxon>
        <taxon>Brassicaceae</taxon>
        <taxon>Camelineae</taxon>
        <taxon>Arabidopsis</taxon>
    </lineage>
</organism>
<comment type="function">
    <text evidence="4">E3 ubiquitin-protein ligase able to catalyze polyubiquitination with ubiquitin-conjugating enzyme E2 UBC8 in vitro.</text>
</comment>
<comment type="catalytic activity">
    <reaction evidence="4">
        <text>S-ubiquitinyl-[E2 ubiquitin-conjugating enzyme]-L-cysteine + [acceptor protein]-L-lysine = [E2 ubiquitin-conjugating enzyme]-L-cysteine + N(6)-ubiquitinyl-[acceptor protein]-L-lysine.</text>
        <dbReference type="EC" id="2.3.2.27"/>
    </reaction>
</comment>
<comment type="pathway">
    <text>Protein modification; protein ubiquitination.</text>
</comment>
<comment type="subcellular location">
    <subcellularLocation>
        <location evidence="5">Membrane</location>
        <topology evidence="5">Single-pass membrane protein</topology>
    </subcellularLocation>
</comment>
<comment type="domain">
    <text evidence="1">The RING-type zinc finger domain mediates binding to an E2 ubiquitin-conjugating enzyme.</text>
</comment>
<comment type="similarity">
    <text evidence="5">Belongs to the RING-type zinc finger family. ATL subfamily.</text>
</comment>
<comment type="sequence caution" evidence="5">
    <conflict type="erroneous gene model prediction">
        <sequence resource="EMBL-CDS" id="AAF69722"/>
    </conflict>
    <text>The predicted gene At1g49200 has been split into 2 genes: At1g49200 and At1g49210.</text>
</comment>
<keyword id="KW-0472">Membrane</keyword>
<keyword id="KW-0479">Metal-binding</keyword>
<keyword id="KW-1185">Reference proteome</keyword>
<keyword id="KW-0808">Transferase</keyword>
<keyword id="KW-0812">Transmembrane</keyword>
<keyword id="KW-1133">Transmembrane helix</keyword>
<keyword id="KW-0833">Ubl conjugation pathway</keyword>
<keyword id="KW-0862">Zinc</keyword>
<keyword id="KW-0863">Zinc-finger</keyword>
<gene>
    <name type="primary">ATL76</name>
    <name type="ordered locus">At1g49210</name>
    <name type="ORF">F27J15.3</name>
</gene>
<evidence type="ECO:0000250" key="1"/>
<evidence type="ECO:0000255" key="2"/>
<evidence type="ECO:0000255" key="3">
    <source>
        <dbReference type="PROSITE-ProRule" id="PRU00175"/>
    </source>
</evidence>
<evidence type="ECO:0000269" key="4">
    <source>
    </source>
</evidence>
<evidence type="ECO:0000305" key="5"/>
<feature type="chain" id="PRO_0000055767" description="E3 ubiquitin-protein ligase ATL76">
    <location>
        <begin position="1"/>
        <end position="225"/>
    </location>
</feature>
<feature type="transmembrane region" description="Helical" evidence="2">
    <location>
        <begin position="59"/>
        <end position="79"/>
    </location>
</feature>
<feature type="zinc finger region" description="RING-type; atypical" evidence="3">
    <location>
        <begin position="135"/>
        <end position="177"/>
    </location>
</feature>
<name>ATL76_ARATH</name>
<reference key="1">
    <citation type="journal article" date="2005" name="Plant Physiol.">
        <title>Functional analysis of the RING-type ubiquitin ligase family of Arabidopsis.</title>
        <authorList>
            <person name="Stone S.L."/>
            <person name="Hauksdottir H."/>
            <person name="Troy A."/>
            <person name="Herschleb J."/>
            <person name="Kraft E."/>
            <person name="Callis J."/>
        </authorList>
    </citation>
    <scope>NUCLEOTIDE SEQUENCE [MRNA]</scope>
    <scope>FUNCTION</scope>
    <scope>CATALYTIC ACTIVITY</scope>
    <source>
        <strain>cv. Columbia</strain>
    </source>
</reference>
<reference key="2">
    <citation type="journal article" date="2000" name="Nature">
        <title>Sequence and analysis of chromosome 1 of the plant Arabidopsis thaliana.</title>
        <authorList>
            <person name="Theologis A."/>
            <person name="Ecker J.R."/>
            <person name="Palm C.J."/>
            <person name="Federspiel N.A."/>
            <person name="Kaul S."/>
            <person name="White O."/>
            <person name="Alonso J."/>
            <person name="Altafi H."/>
            <person name="Araujo R."/>
            <person name="Bowman C.L."/>
            <person name="Brooks S.Y."/>
            <person name="Buehler E."/>
            <person name="Chan A."/>
            <person name="Chao Q."/>
            <person name="Chen H."/>
            <person name="Cheuk R.F."/>
            <person name="Chin C.W."/>
            <person name="Chung M.K."/>
            <person name="Conn L."/>
            <person name="Conway A.B."/>
            <person name="Conway A.R."/>
            <person name="Creasy T.H."/>
            <person name="Dewar K."/>
            <person name="Dunn P."/>
            <person name="Etgu P."/>
            <person name="Feldblyum T.V."/>
            <person name="Feng J.-D."/>
            <person name="Fong B."/>
            <person name="Fujii C.Y."/>
            <person name="Gill J.E."/>
            <person name="Goldsmith A.D."/>
            <person name="Haas B."/>
            <person name="Hansen N.F."/>
            <person name="Hughes B."/>
            <person name="Huizar L."/>
            <person name="Hunter J.L."/>
            <person name="Jenkins J."/>
            <person name="Johnson-Hopson C."/>
            <person name="Khan S."/>
            <person name="Khaykin E."/>
            <person name="Kim C.J."/>
            <person name="Koo H.L."/>
            <person name="Kremenetskaia I."/>
            <person name="Kurtz D.B."/>
            <person name="Kwan A."/>
            <person name="Lam B."/>
            <person name="Langin-Hooper S."/>
            <person name="Lee A."/>
            <person name="Lee J.M."/>
            <person name="Lenz C.A."/>
            <person name="Li J.H."/>
            <person name="Li Y.-P."/>
            <person name="Lin X."/>
            <person name="Liu S.X."/>
            <person name="Liu Z.A."/>
            <person name="Luros J.S."/>
            <person name="Maiti R."/>
            <person name="Marziali A."/>
            <person name="Militscher J."/>
            <person name="Miranda M."/>
            <person name="Nguyen M."/>
            <person name="Nierman W.C."/>
            <person name="Osborne B.I."/>
            <person name="Pai G."/>
            <person name="Peterson J."/>
            <person name="Pham P.K."/>
            <person name="Rizzo M."/>
            <person name="Rooney T."/>
            <person name="Rowley D."/>
            <person name="Sakano H."/>
            <person name="Salzberg S.L."/>
            <person name="Schwartz J.R."/>
            <person name="Shinn P."/>
            <person name="Southwick A.M."/>
            <person name="Sun H."/>
            <person name="Tallon L.J."/>
            <person name="Tambunga G."/>
            <person name="Toriumi M.J."/>
            <person name="Town C.D."/>
            <person name="Utterback T."/>
            <person name="Van Aken S."/>
            <person name="Vaysberg M."/>
            <person name="Vysotskaia V.S."/>
            <person name="Walker M."/>
            <person name="Wu D."/>
            <person name="Yu G."/>
            <person name="Fraser C.M."/>
            <person name="Venter J.C."/>
            <person name="Davis R.W."/>
        </authorList>
    </citation>
    <scope>NUCLEOTIDE SEQUENCE [LARGE SCALE GENOMIC DNA]</scope>
    <source>
        <strain>cv. Columbia</strain>
    </source>
</reference>
<reference key="3">
    <citation type="journal article" date="2017" name="Plant J.">
        <title>Araport11: a complete reannotation of the Arabidopsis thaliana reference genome.</title>
        <authorList>
            <person name="Cheng C.Y."/>
            <person name="Krishnakumar V."/>
            <person name="Chan A.P."/>
            <person name="Thibaud-Nissen F."/>
            <person name="Schobel S."/>
            <person name="Town C.D."/>
        </authorList>
    </citation>
    <scope>GENOME REANNOTATION</scope>
    <source>
        <strain>cv. Columbia</strain>
    </source>
</reference>
<reference key="4">
    <citation type="submission" date="2004-02" db="EMBL/GenBank/DDBJ databases">
        <title>Arabidopsis ORF clones.</title>
        <authorList>
            <person name="Kim C.J."/>
            <person name="Chen H."/>
            <person name="Cheuk R.F."/>
            <person name="Shinn P."/>
            <person name="Ecker J.R."/>
        </authorList>
    </citation>
    <scope>NUCLEOTIDE SEQUENCE [LARGE SCALE MRNA]</scope>
    <source>
        <strain>cv. Columbia</strain>
    </source>
</reference>
<reference key="5">
    <citation type="journal article" date="2002" name="Genome Biol.">
        <title>Evaluation and classification of RING-finger domains encoded by the Arabidopsis genome.</title>
        <authorList>
            <person name="Kosarev P."/>
            <person name="Mayer K.F.X."/>
            <person name="Hardtke C.S."/>
        </authorList>
    </citation>
    <scope>GENE FAMILY ORGANIZATION</scope>
</reference>
<reference key="6">
    <citation type="journal article" date="2006" name="J. Mol. Evol.">
        <title>The ATL gene family from Arabidopsis thaliana and Oryza sativa comprises a large number of putative ubiquitin ligases of the RING-H2 type.</title>
        <authorList>
            <person name="Serrano M."/>
            <person name="Parra S."/>
            <person name="Alcaraz L.D."/>
            <person name="Guzman P."/>
        </authorList>
    </citation>
    <scope>NOMENCLATURE</scope>
    <scope>GENE FAMILY ORGANIZATION</scope>
</reference>
<dbReference type="EC" id="2.3.2.27" evidence="4"/>
<dbReference type="EMBL" id="DQ086858">
    <property type="protein sequence ID" value="AAZ14074.1"/>
    <property type="molecule type" value="mRNA"/>
</dbReference>
<dbReference type="EMBL" id="AC016041">
    <property type="protein sequence ID" value="AAF69722.1"/>
    <property type="status" value="ALT_SEQ"/>
    <property type="molecule type" value="Genomic_DNA"/>
</dbReference>
<dbReference type="EMBL" id="CP002684">
    <property type="protein sequence ID" value="AEE32405.1"/>
    <property type="molecule type" value="Genomic_DNA"/>
</dbReference>
<dbReference type="EMBL" id="BT010932">
    <property type="protein sequence ID" value="AAR24710.1"/>
    <property type="molecule type" value="mRNA"/>
</dbReference>
<dbReference type="EMBL" id="BT011647">
    <property type="protein sequence ID" value="AAS47653.1"/>
    <property type="molecule type" value="mRNA"/>
</dbReference>
<dbReference type="RefSeq" id="NP_175347.1">
    <property type="nucleotide sequence ID" value="NM_103811.4"/>
</dbReference>
<dbReference type="SMR" id="Q6NML0"/>
<dbReference type="STRING" id="3702.Q6NML0"/>
<dbReference type="PaxDb" id="3702-AT1G49210.1"/>
<dbReference type="EnsemblPlants" id="AT1G49210.1">
    <property type="protein sequence ID" value="AT1G49210.1"/>
    <property type="gene ID" value="AT1G49210"/>
</dbReference>
<dbReference type="GeneID" id="841344"/>
<dbReference type="Gramene" id="AT1G49210.1">
    <property type="protein sequence ID" value="AT1G49210.1"/>
    <property type="gene ID" value="AT1G49210"/>
</dbReference>
<dbReference type="KEGG" id="ath:AT1G49210"/>
<dbReference type="Araport" id="AT1G49210"/>
<dbReference type="TAIR" id="AT1G49210">
    <property type="gene designation" value="ATL76"/>
</dbReference>
<dbReference type="eggNOG" id="KOG0800">
    <property type="taxonomic scope" value="Eukaryota"/>
</dbReference>
<dbReference type="HOGENOM" id="CLU_013137_9_0_1"/>
<dbReference type="InParanoid" id="Q6NML0"/>
<dbReference type="OMA" id="DPFDHNS"/>
<dbReference type="OrthoDB" id="8062037at2759"/>
<dbReference type="PhylomeDB" id="Q6NML0"/>
<dbReference type="UniPathway" id="UPA00143"/>
<dbReference type="PRO" id="PR:Q6NML0"/>
<dbReference type="Proteomes" id="UP000006548">
    <property type="component" value="Chromosome 1"/>
</dbReference>
<dbReference type="ExpressionAtlas" id="Q6NML0">
    <property type="expression patterns" value="baseline and differential"/>
</dbReference>
<dbReference type="GO" id="GO:0016020">
    <property type="term" value="C:membrane"/>
    <property type="evidence" value="ECO:0007669"/>
    <property type="project" value="UniProtKB-SubCell"/>
</dbReference>
<dbReference type="GO" id="GO:0004842">
    <property type="term" value="F:ubiquitin-protein transferase activity"/>
    <property type="evidence" value="ECO:0000314"/>
    <property type="project" value="UniProtKB"/>
</dbReference>
<dbReference type="GO" id="GO:0008270">
    <property type="term" value="F:zinc ion binding"/>
    <property type="evidence" value="ECO:0007669"/>
    <property type="project" value="UniProtKB-KW"/>
</dbReference>
<dbReference type="GO" id="GO:0016567">
    <property type="term" value="P:protein ubiquitination"/>
    <property type="evidence" value="ECO:0000314"/>
    <property type="project" value="UniProtKB"/>
</dbReference>
<dbReference type="CDD" id="cd16461">
    <property type="entry name" value="RING-H2_EL5-like"/>
    <property type="match status" value="1"/>
</dbReference>
<dbReference type="FunFam" id="3.30.40.10:FF:000632">
    <property type="entry name" value="RING-H2 finger protein ATL73"/>
    <property type="match status" value="1"/>
</dbReference>
<dbReference type="Gene3D" id="3.30.40.10">
    <property type="entry name" value="Zinc/RING finger domain, C3HC4 (zinc finger)"/>
    <property type="match status" value="1"/>
</dbReference>
<dbReference type="InterPro" id="IPR044602">
    <property type="entry name" value="ATL10/ATL72-79-like"/>
</dbReference>
<dbReference type="InterPro" id="IPR001841">
    <property type="entry name" value="Znf_RING"/>
</dbReference>
<dbReference type="InterPro" id="IPR013083">
    <property type="entry name" value="Znf_RING/FYVE/PHD"/>
</dbReference>
<dbReference type="PANTHER" id="PTHR46905:SF10">
    <property type="entry name" value="E3 UBIQUITIN-PROTEIN LIGASE ATL76-RELATED"/>
    <property type="match status" value="1"/>
</dbReference>
<dbReference type="PANTHER" id="PTHR46905">
    <property type="entry name" value="RING-H2 FINGER PROTEIN ATL78"/>
    <property type="match status" value="1"/>
</dbReference>
<dbReference type="Pfam" id="PF13639">
    <property type="entry name" value="zf-RING_2"/>
    <property type="match status" value="1"/>
</dbReference>
<dbReference type="SMART" id="SM00184">
    <property type="entry name" value="RING"/>
    <property type="match status" value="1"/>
</dbReference>
<dbReference type="SUPFAM" id="SSF57850">
    <property type="entry name" value="RING/U-box"/>
    <property type="match status" value="1"/>
</dbReference>
<dbReference type="PROSITE" id="PS50089">
    <property type="entry name" value="ZF_RING_2"/>
    <property type="match status" value="1"/>
</dbReference>
<protein>
    <recommendedName>
        <fullName>E3 ubiquitin-protein ligase ATL76</fullName>
        <ecNumber evidence="4">2.3.2.27</ecNumber>
    </recommendedName>
    <alternativeName>
        <fullName>RING-H2 finger protein ATL76</fullName>
    </alternativeName>
    <alternativeName>
        <fullName evidence="5">RING-type E3 ubiquitin transferase ATL76</fullName>
    </alternativeName>
</protein>
<accession>Q6NML0</accession>
<accession>Q4FE33</accession>
<accession>Q9M9C0</accession>
<sequence>MSANELPASAQSLQEQFLGSFVTRKLLLHDPFDHNSLRVFAVAPSPLITHENNLKGNVLMLLSVLICGIICCLGLHYIIRCAFRRSSRFMISEPISSLSTPRSSSNKGIKKKALRMFPVVSYSREMNLPGIGEECVICLSDFVSGEQLRLLPKCNHGFHVRCIDKWLQHHLTCPKCRHCLVETCQKILGDFSQADSMASTPTESVIVRIDPLEPEGRVNTFRESS</sequence>